<keyword id="KW-0997">Cell inner membrane</keyword>
<keyword id="KW-1003">Cell membrane</keyword>
<keyword id="KW-0406">Ion transport</keyword>
<keyword id="KW-0472">Membrane</keyword>
<keyword id="KW-0520">NAD</keyword>
<keyword id="KW-1185">Reference proteome</keyword>
<keyword id="KW-0915">Sodium</keyword>
<keyword id="KW-0739">Sodium transport</keyword>
<keyword id="KW-1278">Translocase</keyword>
<keyword id="KW-0812">Transmembrane</keyword>
<keyword id="KW-1133">Transmembrane helix</keyword>
<keyword id="KW-0813">Transport</keyword>
<keyword id="KW-0830">Ubiquinone</keyword>
<dbReference type="EC" id="7.2.1.1" evidence="1"/>
<dbReference type="EMBL" id="AE001273">
    <property type="protein sequence ID" value="AAC67874.1"/>
    <property type="molecule type" value="Genomic_DNA"/>
</dbReference>
<dbReference type="PIR" id="F71535">
    <property type="entry name" value="F71535"/>
</dbReference>
<dbReference type="RefSeq" id="NP_219786.1">
    <property type="nucleotide sequence ID" value="NC_000117.1"/>
</dbReference>
<dbReference type="RefSeq" id="WP_009871628.1">
    <property type="nucleotide sequence ID" value="NC_000117.1"/>
</dbReference>
<dbReference type="SMR" id="O84283"/>
<dbReference type="STRING" id="272561.CT_281"/>
<dbReference type="EnsemblBacteria" id="AAC67874">
    <property type="protein sequence ID" value="AAC67874"/>
    <property type="gene ID" value="CT_281"/>
</dbReference>
<dbReference type="GeneID" id="884844"/>
<dbReference type="KEGG" id="ctr:CT_281"/>
<dbReference type="PATRIC" id="fig|272561.5.peg.300"/>
<dbReference type="HOGENOM" id="CLU_095255_0_0_0"/>
<dbReference type="InParanoid" id="O84283"/>
<dbReference type="OrthoDB" id="9803631at2"/>
<dbReference type="Proteomes" id="UP000000431">
    <property type="component" value="Chromosome"/>
</dbReference>
<dbReference type="GO" id="GO:0009276">
    <property type="term" value="C:Gram-negative-bacterium-type cell wall"/>
    <property type="evidence" value="ECO:0007669"/>
    <property type="project" value="InterPro"/>
</dbReference>
<dbReference type="GO" id="GO:0005886">
    <property type="term" value="C:plasma membrane"/>
    <property type="evidence" value="ECO:0000318"/>
    <property type="project" value="GO_Central"/>
</dbReference>
<dbReference type="GO" id="GO:0016655">
    <property type="term" value="F:oxidoreductase activity, acting on NAD(P)H, quinone or similar compound as acceptor"/>
    <property type="evidence" value="ECO:0007669"/>
    <property type="project" value="UniProtKB-UniRule"/>
</dbReference>
<dbReference type="GO" id="GO:0022904">
    <property type="term" value="P:respiratory electron transport chain"/>
    <property type="evidence" value="ECO:0007669"/>
    <property type="project" value="InterPro"/>
</dbReference>
<dbReference type="GO" id="GO:0006814">
    <property type="term" value="P:sodium ion transport"/>
    <property type="evidence" value="ECO:0007669"/>
    <property type="project" value="UniProtKB-UniRule"/>
</dbReference>
<dbReference type="HAMAP" id="MF_00429">
    <property type="entry name" value="NqrE"/>
    <property type="match status" value="1"/>
</dbReference>
<dbReference type="InterPro" id="IPR003667">
    <property type="entry name" value="NqrDE/RnfAE"/>
</dbReference>
<dbReference type="InterPro" id="IPR050133">
    <property type="entry name" value="NqrDE/RnfAE_oxidrdctase"/>
</dbReference>
<dbReference type="InterPro" id="IPR010967">
    <property type="entry name" value="NqrE"/>
</dbReference>
<dbReference type="NCBIfam" id="TIGR01940">
    <property type="entry name" value="nqrE"/>
    <property type="match status" value="1"/>
</dbReference>
<dbReference type="NCBIfam" id="NF002200">
    <property type="entry name" value="PRK01061.1"/>
    <property type="match status" value="1"/>
</dbReference>
<dbReference type="PANTHER" id="PTHR30335">
    <property type="entry name" value="INTEGRAL MEMBRANE PROTEIN OF SOXR-REDUCING COMPLEX"/>
    <property type="match status" value="1"/>
</dbReference>
<dbReference type="PANTHER" id="PTHR30335:SF1">
    <property type="entry name" value="NA(+)-TRANSLOCATING NADH-QUINONE REDUCTASE SUBUNIT E"/>
    <property type="match status" value="1"/>
</dbReference>
<dbReference type="Pfam" id="PF02508">
    <property type="entry name" value="Rnf-Nqr"/>
    <property type="match status" value="1"/>
</dbReference>
<dbReference type="PIRSF" id="PIRSF006102">
    <property type="entry name" value="NQR_DE"/>
    <property type="match status" value="1"/>
</dbReference>
<sequence>MWLGDYSLLNLLGIFLQATFIQNILLSTFLGMCSYLACSSRLSTANGLGMSVALVLTITGSINWLVHYFITKPGALAWLSPALANIDLSFLELIMFIVVIAAFTQILEVLLERFSRNLYLALGIFLPLIAVNCAILGGVLFGITRNYPFLPMVVFSLGSGCGWWLAIVLFATIREKLAYSDVPQHLRGTGISFITTGLMAMAFMGLTGIDISKPTTSKPAFVTNIATDSPQPNTHSSSEEPKAS</sequence>
<gene>
    <name evidence="1" type="primary">nqrE</name>
    <name type="synonym">nqr5</name>
    <name type="ordered locus">CT_281</name>
</gene>
<comment type="function">
    <text evidence="1">NQR complex catalyzes the reduction of ubiquinone-1 to ubiquinol by two successive reactions, coupled with the transport of Na(+) ions from the cytoplasm to the periplasm. NqrA to NqrE are probably involved in the second step, the conversion of ubisemiquinone to ubiquinol.</text>
</comment>
<comment type="catalytic activity">
    <reaction evidence="1">
        <text>a ubiquinone + n Na(+)(in) + NADH + H(+) = a ubiquinol + n Na(+)(out) + NAD(+)</text>
        <dbReference type="Rhea" id="RHEA:47748"/>
        <dbReference type="Rhea" id="RHEA-COMP:9565"/>
        <dbReference type="Rhea" id="RHEA-COMP:9566"/>
        <dbReference type="ChEBI" id="CHEBI:15378"/>
        <dbReference type="ChEBI" id="CHEBI:16389"/>
        <dbReference type="ChEBI" id="CHEBI:17976"/>
        <dbReference type="ChEBI" id="CHEBI:29101"/>
        <dbReference type="ChEBI" id="CHEBI:57540"/>
        <dbReference type="ChEBI" id="CHEBI:57945"/>
        <dbReference type="EC" id="7.2.1.1"/>
    </reaction>
</comment>
<comment type="subunit">
    <text evidence="1">Composed of six subunits; NqrA, NqrB, NqrC, NqrD, NqrE and NqrF.</text>
</comment>
<comment type="subcellular location">
    <subcellularLocation>
        <location evidence="1">Cell inner membrane</location>
        <topology evidence="1">Multi-pass membrane protein</topology>
    </subcellularLocation>
</comment>
<comment type="similarity">
    <text evidence="1">Belongs to the NqrDE/RnfAE family.</text>
</comment>
<organism>
    <name type="scientific">Chlamydia trachomatis serovar D (strain ATCC VR-885 / DSM 19411 / UW-3/Cx)</name>
    <dbReference type="NCBI Taxonomy" id="272561"/>
    <lineage>
        <taxon>Bacteria</taxon>
        <taxon>Pseudomonadati</taxon>
        <taxon>Chlamydiota</taxon>
        <taxon>Chlamydiia</taxon>
        <taxon>Chlamydiales</taxon>
        <taxon>Chlamydiaceae</taxon>
        <taxon>Chlamydia/Chlamydophila group</taxon>
        <taxon>Chlamydia</taxon>
    </lineage>
</organism>
<feature type="chain" id="PRO_0000214250" description="Na(+)-translocating NADH-quinone reductase subunit E">
    <location>
        <begin position="1"/>
        <end position="244"/>
    </location>
</feature>
<feature type="transmembrane region" description="Helical" evidence="1">
    <location>
        <begin position="11"/>
        <end position="31"/>
    </location>
</feature>
<feature type="transmembrane region" description="Helical" evidence="1">
    <location>
        <begin position="50"/>
        <end position="70"/>
    </location>
</feature>
<feature type="transmembrane region" description="Helical" evidence="1">
    <location>
        <begin position="90"/>
        <end position="110"/>
    </location>
</feature>
<feature type="transmembrane region" description="Helical" evidence="1">
    <location>
        <begin position="123"/>
        <end position="143"/>
    </location>
</feature>
<feature type="transmembrane region" description="Helical" evidence="1">
    <location>
        <begin position="153"/>
        <end position="173"/>
    </location>
</feature>
<feature type="transmembrane region" description="Helical" evidence="1">
    <location>
        <begin position="191"/>
        <end position="211"/>
    </location>
</feature>
<feature type="region of interest" description="Disordered" evidence="2">
    <location>
        <begin position="222"/>
        <end position="244"/>
    </location>
</feature>
<feature type="compositionally biased region" description="Polar residues" evidence="2">
    <location>
        <begin position="222"/>
        <end position="236"/>
    </location>
</feature>
<reference key="1">
    <citation type="journal article" date="1998" name="Science">
        <title>Genome sequence of an obligate intracellular pathogen of humans: Chlamydia trachomatis.</title>
        <authorList>
            <person name="Stephens R.S."/>
            <person name="Kalman S."/>
            <person name="Lammel C.J."/>
            <person name="Fan J."/>
            <person name="Marathe R."/>
            <person name="Aravind L."/>
            <person name="Mitchell W.P."/>
            <person name="Olinger L."/>
            <person name="Tatusov R.L."/>
            <person name="Zhao Q."/>
            <person name="Koonin E.V."/>
            <person name="Davis R.W."/>
        </authorList>
    </citation>
    <scope>NUCLEOTIDE SEQUENCE [LARGE SCALE GENOMIC DNA]</scope>
    <source>
        <strain>ATCC VR-885 / DSM 19411 / UW-3/Cx</strain>
    </source>
</reference>
<proteinExistence type="inferred from homology"/>
<name>NQRE_CHLTR</name>
<accession>O84283</accession>
<evidence type="ECO:0000255" key="1">
    <source>
        <dbReference type="HAMAP-Rule" id="MF_00429"/>
    </source>
</evidence>
<evidence type="ECO:0000256" key="2">
    <source>
        <dbReference type="SAM" id="MobiDB-lite"/>
    </source>
</evidence>
<protein>
    <recommendedName>
        <fullName evidence="1">Na(+)-translocating NADH-quinone reductase subunit E</fullName>
        <shortName evidence="1">Na(+)-NQR subunit E</shortName>
        <shortName evidence="1">Na(+)-translocating NQR subunit E</shortName>
        <ecNumber evidence="1">7.2.1.1</ecNumber>
    </recommendedName>
    <alternativeName>
        <fullName evidence="1">NQR complex subunit E</fullName>
    </alternativeName>
    <alternativeName>
        <fullName evidence="1">NQR-1 subunit E</fullName>
    </alternativeName>
</protein>